<name>IF4A2_HUMAN</name>
<accession>Q14240</accession>
<accession>D3DNU9</accession>
<accession>Q53XJ6</accession>
<accession>Q96B90</accession>
<accession>Q96EA8</accession>
<sequence>MSGGSADYNREHGGPEGMDPDGVIESNWNEIVDNFDDMNLKESLLRGIYAYGFEKPSAIQQRAIIPCIKGYDVIAQAQSGTGKTATFAISILQQLEIEFKETQALVLAPTRELAQQIQKVILALGDYMGATCHACIGGTNVRNEMQKLQAEAPHIVVGTPGRVFDMLNRRYLSPKWIKMFVLDEADEMLSRGFKDQIYEIFQKLNTSIQVVLLSATMPTDVLEVTKKFMRDPIRILVKKEELTLEGIKQFYINVEREEWKLDTLCDLYETLTITQAVIFLNTRRKVDWLTEKMHARDFTVSALHGDMDQKERDVIMREFRSGSSRVLITTDLLARGIDVQQVSLVINYDLPTNRENYIHRIGRGGRFGRKGVAINFVTEEDKRILRDIETFYNTTVEEMPMNVADLI</sequence>
<feature type="chain" id="PRO_0000054938" description="Eukaryotic initiation factor 4A-II">
    <location>
        <begin position="1"/>
        <end position="407"/>
    </location>
</feature>
<feature type="domain" description="Helicase ATP-binding" evidence="2">
    <location>
        <begin position="64"/>
        <end position="235"/>
    </location>
</feature>
<feature type="domain" description="Helicase C-terminal" evidence="3">
    <location>
        <begin position="246"/>
        <end position="407"/>
    </location>
</feature>
<feature type="region of interest" description="Disordered" evidence="4">
    <location>
        <begin position="1"/>
        <end position="22"/>
    </location>
</feature>
<feature type="short sequence motif" description="Q motif">
    <location>
        <begin position="33"/>
        <end position="61"/>
    </location>
</feature>
<feature type="short sequence motif" description="DEAD box">
    <location>
        <begin position="183"/>
        <end position="186"/>
    </location>
</feature>
<feature type="binding site" evidence="2">
    <location>
        <begin position="77"/>
        <end position="84"/>
    </location>
    <ligand>
        <name>ATP</name>
        <dbReference type="ChEBI" id="CHEBI:30616"/>
    </ligand>
</feature>
<feature type="modified residue" description="Phosphothreonine" evidence="11">
    <location>
        <position position="159"/>
    </location>
</feature>
<feature type="splice variant" id="VSP_009629" description="In isoform 2." evidence="9">
    <original>N</original>
    <variation>NS</variation>
    <location>
        <position position="9"/>
    </location>
</feature>
<feature type="sequence variant" id="VAR_088886" description="In NEDHSS; uncertain significance; dbSNP:rs764605841." evidence="8">
    <original>S</original>
    <variation>C</variation>
    <location>
        <position position="2"/>
    </location>
</feature>
<feature type="sequence variant" id="VAR_088887" description="In NEDHSS; uncertain significance; dbSNP:rs1171371205." evidence="8">
    <location>
        <position position="37"/>
    </location>
</feature>
<feature type="sequence variant" id="VAR_052158" description="In dbSNP:rs11538616.">
    <original>Q</original>
    <variation>H</variation>
    <location>
        <position position="93"/>
    </location>
</feature>
<feature type="sequence variant" id="VAR_088888" description="In NEDHSS; likely pathogenic." evidence="8">
    <original>G</original>
    <variation>W</variation>
    <location>
        <position position="161"/>
    </location>
</feature>
<feature type="sequence variant" id="VAR_035838" description="In a breast cancer sample; somatic mutation." evidence="7">
    <original>V</original>
    <variation>L</variation>
    <location>
        <position position="181"/>
    </location>
</feature>
<feature type="sequence variant" id="VAR_088889" description="In NEDHSS; uncertain significance." evidence="8">
    <original>G</original>
    <variation>S</variation>
    <location>
        <position position="192"/>
    </location>
</feature>
<feature type="sequence variant" id="VAR_088890" description="In NEDHSS; likely pathogenic." evidence="8">
    <original>S</original>
    <variation>Y</variation>
    <location>
        <position position="214"/>
    </location>
</feature>
<feature type="sequence variant" id="VAR_088891" description="In NEDHSS; likely pathogenic." evidence="8">
    <original>T</original>
    <variation>A</variation>
    <location>
        <position position="216"/>
    </location>
</feature>
<feature type="sequence variant" id="VAR_088892" description="In NEDHSS; likely pathogenic; fails to rescue lethality in eif4a2-null Drosophila probably due to a toxic gain-of-function effect." evidence="8">
    <original>T</original>
    <variation>I</variation>
    <location>
        <position position="216"/>
    </location>
</feature>
<feature type="sequence variant" id="VAR_088893" description="In NEDHSS; likely pathogenic; dominant loss-of-function variant unable to fully rescue lethality in eif4a2-null Drosophila; dbSNP:rs2108458617." evidence="8">
    <original>T</original>
    <variation>I</variation>
    <location>
        <position position="243"/>
    </location>
</feature>
<feature type="sequence variant" id="VAR_088894" description="In NEDHSS; uncertain significance." evidence="8">
    <location>
        <position position="315"/>
    </location>
</feature>
<feature type="sequence variant" id="VAR_088895" description="In NEDHSS; likely pathogenic; dominant loss-of-function variant unable to fully rescue lethality in eif4a2-null Drosophila." evidence="8">
    <original>L</original>
    <variation>F</variation>
    <location>
        <position position="344"/>
    </location>
</feature>
<feature type="sequence variant" id="VAR_088896" description="In NEDHSS; likely pathogenic." evidence="8">
    <original>G</original>
    <variation>S</variation>
    <location>
        <position position="362"/>
    </location>
</feature>
<feature type="sequence variant" id="VAR_088897" description="In NEDHSS; likely pathogenic; dominant loss-of-function variant unable to fully rescue lethality in eif4a2-null Drosophila; dbSNP:rs2108464046." evidence="8">
    <original>G</original>
    <variation>E</variation>
    <location>
        <position position="364"/>
    </location>
</feature>
<feature type="sequence variant" id="VAR_088898" description="In NEDHSS; uncertain significance." evidence="8">
    <location>
        <begin position="387"/>
        <end position="388"/>
    </location>
</feature>
<feature type="sequence conflict" description="In Ref. 5; AAH15842." evidence="10" ref="5">
    <original>N</original>
    <variation>S</variation>
    <location>
        <position position="27"/>
    </location>
</feature>
<feature type="sequence conflict" description="In Ref. 1; BAA06336." evidence="10" ref="1">
    <original>LL</original>
    <variation>FA</variation>
    <location>
        <begin position="212"/>
        <end position="213"/>
    </location>
</feature>
<feature type="helix" evidence="12">
    <location>
        <begin position="35"/>
        <end position="37"/>
    </location>
</feature>
<feature type="helix" evidence="12">
    <location>
        <begin position="42"/>
        <end position="51"/>
    </location>
</feature>
<feature type="helix" evidence="12">
    <location>
        <begin position="58"/>
        <end position="68"/>
    </location>
</feature>
<feature type="strand" evidence="12">
    <location>
        <begin position="73"/>
        <end position="75"/>
    </location>
</feature>
<feature type="helix" evidence="12">
    <location>
        <begin position="81"/>
        <end position="94"/>
    </location>
</feature>
<feature type="strand" evidence="12">
    <location>
        <begin position="104"/>
        <end position="107"/>
    </location>
</feature>
<feature type="helix" evidence="12">
    <location>
        <begin position="111"/>
        <end position="124"/>
    </location>
</feature>
<feature type="turn" evidence="12">
    <location>
        <begin position="125"/>
        <end position="129"/>
    </location>
</feature>
<feature type="strand" evidence="12">
    <location>
        <begin position="132"/>
        <end position="135"/>
    </location>
</feature>
<feature type="strand" evidence="12">
    <location>
        <begin position="154"/>
        <end position="158"/>
    </location>
</feature>
<feature type="helix" evidence="12">
    <location>
        <begin position="160"/>
        <end position="168"/>
    </location>
</feature>
<feature type="strand" evidence="12">
    <location>
        <begin position="179"/>
        <end position="184"/>
    </location>
</feature>
<feature type="helix" evidence="12">
    <location>
        <begin position="185"/>
        <end position="190"/>
    </location>
</feature>
<feature type="helix" evidence="12">
    <location>
        <begin position="194"/>
        <end position="203"/>
    </location>
</feature>
<feature type="strand" evidence="12">
    <location>
        <begin position="209"/>
        <end position="213"/>
    </location>
</feature>
<feature type="helix" evidence="12">
    <location>
        <begin position="219"/>
        <end position="228"/>
    </location>
</feature>
<feature type="strand" evidence="12">
    <location>
        <begin position="233"/>
        <end position="235"/>
    </location>
</feature>
<protein>
    <recommendedName>
        <fullName>Eukaryotic initiation factor 4A-II</fullName>
        <shortName>eIF-4A-II</shortName>
        <shortName>eIF4A-II</shortName>
        <ecNumber>3.6.4.13</ecNumber>
    </recommendedName>
    <alternativeName>
        <fullName>ATP-dependent RNA helicase eIF4A-2</fullName>
    </alternativeName>
</protein>
<keyword id="KW-0002">3D-structure</keyword>
<keyword id="KW-0025">Alternative splicing</keyword>
<keyword id="KW-0067">ATP-binding</keyword>
<keyword id="KW-0225">Disease variant</keyword>
<keyword id="KW-0347">Helicase</keyword>
<keyword id="KW-0945">Host-virus interaction</keyword>
<keyword id="KW-0378">Hydrolase</keyword>
<keyword id="KW-0396">Initiation factor</keyword>
<keyword id="KW-0991">Intellectual disability</keyword>
<keyword id="KW-0547">Nucleotide-binding</keyword>
<keyword id="KW-0597">Phosphoprotein</keyword>
<keyword id="KW-0648">Protein biosynthesis</keyword>
<keyword id="KW-1267">Proteomics identification</keyword>
<keyword id="KW-1185">Reference proteome</keyword>
<keyword id="KW-0694">RNA-binding</keyword>
<reference key="1">
    <citation type="journal article" date="1995" name="Cytogenet. Cell Genet.">
        <title>Isolation and mapping of the human EIF4A2 gene homologous to the murine protein synthesis initiation factor 4A-II gene Eif4a2.</title>
        <authorList>
            <person name="Sudo K."/>
            <person name="Takahashi E."/>
            <person name="Nakamura Y."/>
        </authorList>
    </citation>
    <scope>NUCLEOTIDE SEQUENCE [MRNA] (ISOFORM 1)</scope>
    <source>
        <tissue>Lung</tissue>
    </source>
</reference>
<reference key="2">
    <citation type="submission" date="2003-08" db="EMBL/GenBank/DDBJ databases">
        <title>Cloning of human full-length CDSs in BD Creator(TM) system donor vector.</title>
        <authorList>
            <person name="Kalnine N."/>
            <person name="Chen X."/>
            <person name="Rolfs A."/>
            <person name="Halleck A."/>
            <person name="Hines L."/>
            <person name="Eisenstein S."/>
            <person name="Koundinya M."/>
            <person name="Raphael J."/>
            <person name="Moreira D."/>
            <person name="Kelley T."/>
            <person name="LaBaer J."/>
            <person name="Lin Y."/>
            <person name="Phelan M."/>
            <person name="Farmer A."/>
        </authorList>
    </citation>
    <scope>NUCLEOTIDE SEQUENCE [LARGE SCALE MRNA] (ISOFORM 1)</scope>
</reference>
<reference key="3">
    <citation type="journal article" date="2006" name="Nature">
        <title>The DNA sequence, annotation and analysis of human chromosome 3.</title>
        <authorList>
            <person name="Muzny D.M."/>
            <person name="Scherer S.E."/>
            <person name="Kaul R."/>
            <person name="Wang J."/>
            <person name="Yu J."/>
            <person name="Sudbrak R."/>
            <person name="Buhay C.J."/>
            <person name="Chen R."/>
            <person name="Cree A."/>
            <person name="Ding Y."/>
            <person name="Dugan-Rocha S."/>
            <person name="Gill R."/>
            <person name="Gunaratne P."/>
            <person name="Harris R.A."/>
            <person name="Hawes A.C."/>
            <person name="Hernandez J."/>
            <person name="Hodgson A.V."/>
            <person name="Hume J."/>
            <person name="Jackson A."/>
            <person name="Khan Z.M."/>
            <person name="Kovar-Smith C."/>
            <person name="Lewis L.R."/>
            <person name="Lozado R.J."/>
            <person name="Metzker M.L."/>
            <person name="Milosavljevic A."/>
            <person name="Miner G.R."/>
            <person name="Morgan M.B."/>
            <person name="Nazareth L.V."/>
            <person name="Scott G."/>
            <person name="Sodergren E."/>
            <person name="Song X.-Z."/>
            <person name="Steffen D."/>
            <person name="Wei S."/>
            <person name="Wheeler D.A."/>
            <person name="Wright M.W."/>
            <person name="Worley K.C."/>
            <person name="Yuan Y."/>
            <person name="Zhang Z."/>
            <person name="Adams C.Q."/>
            <person name="Ansari-Lari M.A."/>
            <person name="Ayele M."/>
            <person name="Brown M.J."/>
            <person name="Chen G."/>
            <person name="Chen Z."/>
            <person name="Clendenning J."/>
            <person name="Clerc-Blankenburg K.P."/>
            <person name="Chen R."/>
            <person name="Chen Z."/>
            <person name="Davis C."/>
            <person name="Delgado O."/>
            <person name="Dinh H.H."/>
            <person name="Dong W."/>
            <person name="Draper H."/>
            <person name="Ernst S."/>
            <person name="Fu G."/>
            <person name="Gonzalez-Garay M.L."/>
            <person name="Garcia D.K."/>
            <person name="Gillett W."/>
            <person name="Gu J."/>
            <person name="Hao B."/>
            <person name="Haugen E."/>
            <person name="Havlak P."/>
            <person name="He X."/>
            <person name="Hennig S."/>
            <person name="Hu S."/>
            <person name="Huang W."/>
            <person name="Jackson L.R."/>
            <person name="Jacob L.S."/>
            <person name="Kelly S.H."/>
            <person name="Kube M."/>
            <person name="Levy R."/>
            <person name="Li Z."/>
            <person name="Liu B."/>
            <person name="Liu J."/>
            <person name="Liu W."/>
            <person name="Lu J."/>
            <person name="Maheshwari M."/>
            <person name="Nguyen B.-V."/>
            <person name="Okwuonu G.O."/>
            <person name="Palmeiri A."/>
            <person name="Pasternak S."/>
            <person name="Perez L.M."/>
            <person name="Phelps K.A."/>
            <person name="Plopper F.J."/>
            <person name="Qiang B."/>
            <person name="Raymond C."/>
            <person name="Rodriguez R."/>
            <person name="Saenphimmachak C."/>
            <person name="Santibanez J."/>
            <person name="Shen H."/>
            <person name="Shen Y."/>
            <person name="Subramanian S."/>
            <person name="Tabor P.E."/>
            <person name="Verduzco D."/>
            <person name="Waldron L."/>
            <person name="Wang J."/>
            <person name="Wang J."/>
            <person name="Wang Q."/>
            <person name="Williams G.A."/>
            <person name="Wong G.K.-S."/>
            <person name="Yao Z."/>
            <person name="Zhang J."/>
            <person name="Zhang X."/>
            <person name="Zhao G."/>
            <person name="Zhou J."/>
            <person name="Zhou Y."/>
            <person name="Nelson D."/>
            <person name="Lehrach H."/>
            <person name="Reinhardt R."/>
            <person name="Naylor S.L."/>
            <person name="Yang H."/>
            <person name="Olson M."/>
            <person name="Weinstock G."/>
            <person name="Gibbs R.A."/>
        </authorList>
    </citation>
    <scope>NUCLEOTIDE SEQUENCE [LARGE SCALE GENOMIC DNA]</scope>
</reference>
<reference key="4">
    <citation type="submission" date="2005-09" db="EMBL/GenBank/DDBJ databases">
        <authorList>
            <person name="Mural R.J."/>
            <person name="Istrail S."/>
            <person name="Sutton G.G."/>
            <person name="Florea L."/>
            <person name="Halpern A.L."/>
            <person name="Mobarry C.M."/>
            <person name="Lippert R."/>
            <person name="Walenz B."/>
            <person name="Shatkay H."/>
            <person name="Dew I."/>
            <person name="Miller J.R."/>
            <person name="Flanigan M.J."/>
            <person name="Edwards N.J."/>
            <person name="Bolanos R."/>
            <person name="Fasulo D."/>
            <person name="Halldorsson B.V."/>
            <person name="Hannenhalli S."/>
            <person name="Turner R."/>
            <person name="Yooseph S."/>
            <person name="Lu F."/>
            <person name="Nusskern D.R."/>
            <person name="Shue B.C."/>
            <person name="Zheng X.H."/>
            <person name="Zhong F."/>
            <person name="Delcher A.L."/>
            <person name="Huson D.H."/>
            <person name="Kravitz S.A."/>
            <person name="Mouchard L."/>
            <person name="Reinert K."/>
            <person name="Remington K.A."/>
            <person name="Clark A.G."/>
            <person name="Waterman M.S."/>
            <person name="Eichler E.E."/>
            <person name="Adams M.D."/>
            <person name="Hunkapiller M.W."/>
            <person name="Myers E.W."/>
            <person name="Venter J.C."/>
        </authorList>
    </citation>
    <scope>NUCLEOTIDE SEQUENCE [LARGE SCALE GENOMIC DNA]</scope>
</reference>
<reference key="5">
    <citation type="journal article" date="2004" name="Genome Res.">
        <title>The status, quality, and expansion of the NIH full-length cDNA project: the Mammalian Gene Collection (MGC).</title>
        <authorList>
            <consortium name="The MGC Project Team"/>
        </authorList>
    </citation>
    <scope>NUCLEOTIDE SEQUENCE [LARGE SCALE MRNA] (ISOFORMS 1 AND 2)</scope>
    <source>
        <tissue>Bone marrow</tissue>
        <tissue>Brain</tissue>
        <tissue>Lymph</tissue>
        <tissue>Skeletal muscle</tissue>
    </source>
</reference>
<reference key="6">
    <citation type="journal article" date="2001" name="J. Biol. Chem.">
        <title>Eukaryotic initiation factors 4A (eIF4A) and 4G (eIF4G) mutually interact in a 1:1 ratio in vivo.</title>
        <authorList>
            <person name="Li W."/>
            <person name="Belsham G.J."/>
            <person name="Proud C.G."/>
        </authorList>
    </citation>
    <scope>INTERACTION WITH EIF4E</scope>
</reference>
<reference key="7">
    <citation type="journal article" date="2005" name="Gene">
        <title>Identification of NOM1, a nucleolar, eIF4A binding protein encoded within the chromosome 7q36 breakpoint region targeted in cases of pediatric acute myeloid leukemia.</title>
        <authorList>
            <person name="Simmons H.M."/>
            <person name="Ruis B.L."/>
            <person name="Kapoor M."/>
            <person name="Hudacek A.W."/>
            <person name="Conklin K.F."/>
        </authorList>
    </citation>
    <scope>POSSIBLE INTERACTION WITH NOM1</scope>
</reference>
<reference key="8">
    <citation type="journal article" date="2005" name="J. Virol.">
        <title>mRNA decay during herpes simplex virus (HSV) infections: protein-protein interactions involving the HSV virion host shutoff protein and translation factors eIF4H and eIF4A.</title>
        <authorList>
            <person name="Feng P."/>
            <person name="Everly D.N. Jr."/>
            <person name="Read G.S."/>
        </authorList>
    </citation>
    <scope>INTERACTION WITH HHV-1 VHS (MICROBIAL INFECTION)</scope>
</reference>
<reference key="9">
    <citation type="journal article" date="2011" name="BMC Syst. Biol.">
        <title>Initial characterization of the human central proteome.</title>
        <authorList>
            <person name="Burkard T.R."/>
            <person name="Planyavsky M."/>
            <person name="Kaupe I."/>
            <person name="Breitwieser F.P."/>
            <person name="Buerckstuemmer T."/>
            <person name="Bennett K.L."/>
            <person name="Superti-Furga G."/>
            <person name="Colinge J."/>
        </authorList>
    </citation>
    <scope>IDENTIFICATION BY MASS SPECTROMETRY [LARGE SCALE ANALYSIS]</scope>
</reference>
<reference key="10">
    <citation type="journal article" date="2013" name="J. Proteome Res.">
        <title>Toward a comprehensive characterization of a human cancer cell phosphoproteome.</title>
        <authorList>
            <person name="Zhou H."/>
            <person name="Di Palma S."/>
            <person name="Preisinger C."/>
            <person name="Peng M."/>
            <person name="Polat A.N."/>
            <person name="Heck A.J."/>
            <person name="Mohammed S."/>
        </authorList>
    </citation>
    <scope>PHOSPHORYLATION [LARGE SCALE ANALYSIS] AT THR-159</scope>
    <scope>IDENTIFICATION BY MASS SPECTROMETRY [LARGE SCALE ANALYSIS]</scope>
    <source>
        <tissue>Erythroleukemia</tissue>
    </source>
</reference>
<reference key="11">
    <citation type="journal article" date="2014" name="J. Proteomics">
        <title>An enzyme assisted RP-RPLC approach for in-depth analysis of human liver phosphoproteome.</title>
        <authorList>
            <person name="Bian Y."/>
            <person name="Song C."/>
            <person name="Cheng K."/>
            <person name="Dong M."/>
            <person name="Wang F."/>
            <person name="Huang J."/>
            <person name="Sun D."/>
            <person name="Wang L."/>
            <person name="Ye M."/>
            <person name="Zou H."/>
        </authorList>
    </citation>
    <scope>IDENTIFICATION BY MASS SPECTROMETRY [LARGE SCALE ANALYSIS]</scope>
    <source>
        <tissue>Liver</tissue>
    </source>
</reference>
<reference key="12">
    <citation type="journal article" date="2010" name="PLoS ONE">
        <title>Comparative structural analysis of human DEAD-box RNA helicases.</title>
        <authorList>
            <person name="Schutz P."/>
            <person name="Karlberg T."/>
            <person name="van den Berg S."/>
            <person name="Collins R."/>
            <person name="Lehtio L."/>
            <person name="Hogbom M."/>
            <person name="Holmberg-Schiavone L."/>
            <person name="Tempel W."/>
            <person name="Park H.W."/>
            <person name="Hammarstrom M."/>
            <person name="Moche M."/>
            <person name="Thorsell A.G."/>
            <person name="Schuler H."/>
        </authorList>
    </citation>
    <scope>X-RAY CRYSTALLOGRAPHY (1.85 ANGSTROMS) OF 22-240</scope>
</reference>
<reference key="13">
    <citation type="journal article" date="2006" name="Science">
        <title>The consensus coding sequences of human breast and colorectal cancers.</title>
        <authorList>
            <person name="Sjoeblom T."/>
            <person name="Jones S."/>
            <person name="Wood L.D."/>
            <person name="Parsons D.W."/>
            <person name="Lin J."/>
            <person name="Barber T.D."/>
            <person name="Mandelker D."/>
            <person name="Leary R.J."/>
            <person name="Ptak J."/>
            <person name="Silliman N."/>
            <person name="Szabo S."/>
            <person name="Buckhaults P."/>
            <person name="Farrell C."/>
            <person name="Meeh P."/>
            <person name="Markowitz S.D."/>
            <person name="Willis J."/>
            <person name="Dawson D."/>
            <person name="Willson J.K.V."/>
            <person name="Gazdar A.F."/>
            <person name="Hartigan J."/>
            <person name="Wu L."/>
            <person name="Liu C."/>
            <person name="Parmigiani G."/>
            <person name="Park B.H."/>
            <person name="Bachman K.E."/>
            <person name="Papadopoulos N."/>
            <person name="Vogelstein B."/>
            <person name="Kinzler K.W."/>
            <person name="Velculescu V.E."/>
        </authorList>
    </citation>
    <scope>VARIANT [LARGE SCALE ANALYSIS] LEU-181</scope>
</reference>
<reference key="14">
    <citation type="journal article" date="2023" name="Am. J. Hum. Genet.">
        <title>Rare EIF4A2 variants are associated with a neurodevelopmental disorder characterized by intellectual disability, hypotonia, and epilepsy.</title>
        <authorList>
            <consortium name="Genomics England Research Consortium"/>
            <person name="Paul M.S."/>
            <person name="Duncan A.R."/>
            <person name="Genetti C.A."/>
            <person name="Pan H."/>
            <person name="Jackson A."/>
            <person name="Grant P.E."/>
            <person name="Shi J."/>
            <person name="Pinelli M."/>
            <person name="Brunetti-Pierri N."/>
            <person name="Garza-Flores A."/>
            <person name="Shahani D."/>
            <person name="Saneto R.P."/>
            <person name="Zampino G."/>
            <person name="Leoni C."/>
            <person name="Agolini E."/>
            <person name="Novelli A."/>
            <person name="Bluemlein U."/>
            <person name="Haack T.B."/>
            <person name="Heinritz W."/>
            <person name="Matzker E."/>
            <person name="Alhaddad B."/>
            <person name="Abou Jamra R."/>
            <person name="Bartolomaeus T."/>
            <person name="Al-Hamdan S."/>
            <person name="Carapito R."/>
            <person name="Isidor B."/>
            <person name="Bahram S."/>
            <person name="Ritter A."/>
            <person name="Izumi K."/>
            <person name="Shakked B.P."/>
            <person name="Barel O."/>
            <person name="Ben Zeev B."/>
            <person name="Begtrup A."/>
            <person name="Carere D.A."/>
            <person name="Mullegama S.V."/>
            <person name="Palculict T.B."/>
            <person name="Calame D.G."/>
            <person name="Schwan K."/>
            <person name="Aycinena A.R.P."/>
            <person name="Traberg R."/>
            <person name="Douzgou S."/>
            <person name="Pirt H."/>
            <person name="Ismayilova N."/>
            <person name="Banka S."/>
            <person name="Chao H.T."/>
            <person name="Agrawal P.B."/>
        </authorList>
    </citation>
    <scope>VARIANTS NEDHSS CYS-2; ASP-37 DEL; TRP-161; SER-192; TYR-214; ALA-216; ILE-216; ILE-243; ILE-315 DEL; PHE-344; SER-362; GLU-364 AND 387-ASP-ILE-388 DEL</scope>
    <scope>CHARACTERIZATION OF VARIANTS NEDHSS ILE-216; ILE-243; PHE-344 AND GLU-364</scope>
    <scope>INVOLVEMENT IN NEDHSS</scope>
</reference>
<reference key="15">
    <citation type="journal article" date="2023" name="Am. J. Hum. Genet.">
        <authorList>
            <consortium name="Genomics England Research Consortium"/>
            <person name="Paul M.S."/>
            <person name="Duncan A.R."/>
            <person name="Genetti C.A."/>
            <person name="Pan H."/>
            <person name="Jackson A."/>
            <person name="Grant P.E."/>
            <person name="Shi J."/>
            <person name="Pinelli M."/>
            <person name="Brunetti-Pierri N."/>
            <person name="Garza-Flores A."/>
            <person name="Shahani D."/>
            <person name="Saneto R.P."/>
            <person name="Zampino G."/>
            <person name="Leoni C."/>
            <person name="Agolini E."/>
            <person name="Novelli A."/>
            <person name="Bluemlein U."/>
            <person name="Haack T.B."/>
            <person name="Heinritz W."/>
            <person name="Matzker E."/>
            <person name="Alhaddad B."/>
            <person name="Abou Jamra R."/>
            <person name="Bartolomaeus T."/>
            <person name="Al-Hamdan S."/>
            <person name="Carapito R."/>
            <person name="Isidor B."/>
            <person name="Bahram S."/>
            <person name="Ritter A."/>
            <person name="Izumi K."/>
            <person name="Shakked B.P."/>
            <person name="Barel O."/>
            <person name="Ben Zeev B."/>
            <person name="Begtrup A."/>
            <person name="Carere D.A."/>
            <person name="Mullegama S.V."/>
            <person name="Palculict T.B."/>
            <person name="Calame D.G."/>
            <person name="Schwan K."/>
            <person name="Aycinena A.R.P."/>
            <person name="Traberg R."/>
            <person name="Douzgou S."/>
            <person name="Pirt H."/>
            <person name="Ismayilova N."/>
            <person name="Banka S."/>
            <person name="Chao H.T."/>
            <person name="Agrawal P.B."/>
        </authorList>
    </citation>
    <scope>ERRATUM OF PUBMED:36528028</scope>
</reference>
<evidence type="ECO:0000250" key="1"/>
<evidence type="ECO:0000255" key="2">
    <source>
        <dbReference type="PROSITE-ProRule" id="PRU00541"/>
    </source>
</evidence>
<evidence type="ECO:0000255" key="3">
    <source>
        <dbReference type="PROSITE-ProRule" id="PRU00542"/>
    </source>
</evidence>
<evidence type="ECO:0000256" key="4">
    <source>
        <dbReference type="SAM" id="MobiDB-lite"/>
    </source>
</evidence>
<evidence type="ECO:0000269" key="5">
    <source>
    </source>
</evidence>
<evidence type="ECO:0000269" key="6">
    <source>
    </source>
</evidence>
<evidence type="ECO:0000269" key="7">
    <source>
    </source>
</evidence>
<evidence type="ECO:0000269" key="8">
    <source>
    </source>
</evidence>
<evidence type="ECO:0000303" key="9">
    <source>
    </source>
</evidence>
<evidence type="ECO:0000305" key="10"/>
<evidence type="ECO:0007744" key="11">
    <source>
    </source>
</evidence>
<evidence type="ECO:0007829" key="12">
    <source>
        <dbReference type="PDB" id="3BOR"/>
    </source>
</evidence>
<organism>
    <name type="scientific">Homo sapiens</name>
    <name type="common">Human</name>
    <dbReference type="NCBI Taxonomy" id="9606"/>
    <lineage>
        <taxon>Eukaryota</taxon>
        <taxon>Metazoa</taxon>
        <taxon>Chordata</taxon>
        <taxon>Craniata</taxon>
        <taxon>Vertebrata</taxon>
        <taxon>Euteleostomi</taxon>
        <taxon>Mammalia</taxon>
        <taxon>Eutheria</taxon>
        <taxon>Euarchontoglires</taxon>
        <taxon>Primates</taxon>
        <taxon>Haplorrhini</taxon>
        <taxon>Catarrhini</taxon>
        <taxon>Hominidae</taxon>
        <taxon>Homo</taxon>
    </lineage>
</organism>
<dbReference type="EC" id="3.6.4.13"/>
<dbReference type="EMBL" id="D30655">
    <property type="protein sequence ID" value="BAA06336.1"/>
    <property type="molecule type" value="mRNA"/>
</dbReference>
<dbReference type="EMBL" id="BT009860">
    <property type="protein sequence ID" value="AAP88862.1"/>
    <property type="molecule type" value="mRNA"/>
</dbReference>
<dbReference type="EMBL" id="AC112907">
    <property type="status" value="NOT_ANNOTATED_CDS"/>
    <property type="molecule type" value="Genomic_DNA"/>
</dbReference>
<dbReference type="EMBL" id="CH471052">
    <property type="protein sequence ID" value="EAW78172.1"/>
    <property type="molecule type" value="Genomic_DNA"/>
</dbReference>
<dbReference type="EMBL" id="CH471052">
    <property type="protein sequence ID" value="EAW78177.1"/>
    <property type="molecule type" value="Genomic_DNA"/>
</dbReference>
<dbReference type="EMBL" id="BC012547">
    <property type="protein sequence ID" value="AAH12547.1"/>
    <property type="molecule type" value="mRNA"/>
</dbReference>
<dbReference type="EMBL" id="BC013708">
    <property type="protein sequence ID" value="AAH13708.1"/>
    <property type="molecule type" value="mRNA"/>
</dbReference>
<dbReference type="EMBL" id="BC015842">
    <property type="protein sequence ID" value="AAH15842.1"/>
    <property type="molecule type" value="mRNA"/>
</dbReference>
<dbReference type="EMBL" id="BC048105">
    <property type="protein sequence ID" value="AAH48105.1"/>
    <property type="molecule type" value="mRNA"/>
</dbReference>
<dbReference type="CCDS" id="CCDS3282.1">
    <molecule id="Q14240-1"/>
</dbReference>
<dbReference type="RefSeq" id="NP_001958.2">
    <molecule id="Q14240-1"/>
    <property type="nucleotide sequence ID" value="NM_001967.4"/>
</dbReference>
<dbReference type="PDB" id="3BOR">
    <property type="method" value="X-ray"/>
    <property type="resolution" value="1.85 A"/>
    <property type="chains" value="A=22-240"/>
</dbReference>
<dbReference type="PDBsum" id="3BOR"/>
<dbReference type="SMR" id="Q14240"/>
<dbReference type="BioGRID" id="108290">
    <property type="interactions" value="165"/>
</dbReference>
<dbReference type="ComplexPortal" id="CPX-5634">
    <property type="entry name" value="Eukaryotic translation initiation factor 4F, EIF4A2 and EIF4G1 variant"/>
</dbReference>
<dbReference type="ComplexPortal" id="CPX-5636">
    <property type="entry name" value="Eukaryotic translation initiation factor 4F, EIF4A2 and EIF4G3 variant"/>
</dbReference>
<dbReference type="FunCoup" id="Q14240">
    <property type="interactions" value="2685"/>
</dbReference>
<dbReference type="IntAct" id="Q14240">
    <property type="interactions" value="66"/>
</dbReference>
<dbReference type="MINT" id="Q14240"/>
<dbReference type="STRING" id="9606.ENSP00000326381"/>
<dbReference type="BindingDB" id="Q14240"/>
<dbReference type="ChEMBL" id="CHEMBL4105952"/>
<dbReference type="GlyGen" id="Q14240">
    <property type="glycosylation" value="1 site, 1 O-linked glycan (1 site)"/>
</dbReference>
<dbReference type="iPTMnet" id="Q14240"/>
<dbReference type="MetOSite" id="Q14240"/>
<dbReference type="PhosphoSitePlus" id="Q14240"/>
<dbReference type="SwissPalm" id="Q14240"/>
<dbReference type="BioMuta" id="EIF4A2"/>
<dbReference type="DMDM" id="45645183"/>
<dbReference type="jPOST" id="Q14240"/>
<dbReference type="MassIVE" id="Q14240"/>
<dbReference type="PaxDb" id="9606-ENSP00000326381"/>
<dbReference type="PeptideAtlas" id="Q14240"/>
<dbReference type="PRIDE" id="Q14240"/>
<dbReference type="ProteomicsDB" id="59936">
    <molecule id="Q14240-1"/>
</dbReference>
<dbReference type="ProteomicsDB" id="59937">
    <molecule id="Q14240-2"/>
</dbReference>
<dbReference type="Pumba" id="Q14240"/>
<dbReference type="Antibodypedia" id="3189">
    <property type="antibodies" value="307 antibodies from 33 providers"/>
</dbReference>
<dbReference type="DNASU" id="1974"/>
<dbReference type="Ensembl" id="ENST00000323963.10">
    <molecule id="Q14240-1"/>
    <property type="protein sequence ID" value="ENSP00000326381.5"/>
    <property type="gene ID" value="ENSG00000156976.17"/>
</dbReference>
<dbReference type="Ensembl" id="ENST00000440191.6">
    <molecule id="Q14240-2"/>
    <property type="protein sequence ID" value="ENSP00000398370.2"/>
    <property type="gene ID" value="ENSG00000156976.17"/>
</dbReference>
<dbReference type="GeneID" id="1974"/>
<dbReference type="KEGG" id="hsa:1974"/>
<dbReference type="MANE-Select" id="ENST00000323963.10">
    <property type="protein sequence ID" value="ENSP00000326381.5"/>
    <property type="RefSeq nucleotide sequence ID" value="NM_001967.4"/>
    <property type="RefSeq protein sequence ID" value="NP_001958.2"/>
</dbReference>
<dbReference type="UCSC" id="uc003fqs.4">
    <molecule id="Q14240-1"/>
    <property type="organism name" value="human"/>
</dbReference>
<dbReference type="AGR" id="HGNC:3284"/>
<dbReference type="CTD" id="1974"/>
<dbReference type="DisGeNET" id="1974"/>
<dbReference type="GeneCards" id="EIF4A2"/>
<dbReference type="HGNC" id="HGNC:3284">
    <property type="gene designation" value="EIF4A2"/>
</dbReference>
<dbReference type="HPA" id="ENSG00000156976">
    <property type="expression patterns" value="Low tissue specificity"/>
</dbReference>
<dbReference type="MalaCards" id="EIF4A2"/>
<dbReference type="MIM" id="601102">
    <property type="type" value="gene"/>
</dbReference>
<dbReference type="MIM" id="620455">
    <property type="type" value="phenotype"/>
</dbReference>
<dbReference type="neXtProt" id="NX_Q14240"/>
<dbReference type="OpenTargets" id="ENSG00000156976"/>
<dbReference type="Orphanet" id="528084">
    <property type="disease" value="Non-specific syndromic intellectual disability"/>
</dbReference>
<dbReference type="PharmGKB" id="PA27712"/>
<dbReference type="VEuPathDB" id="HostDB:ENSG00000156976"/>
<dbReference type="eggNOG" id="KOG0327">
    <property type="taxonomic scope" value="Eukaryota"/>
</dbReference>
<dbReference type="GeneTree" id="ENSGT00940000153783"/>
<dbReference type="HOGENOM" id="CLU_003041_1_0_1"/>
<dbReference type="InParanoid" id="Q14240"/>
<dbReference type="OMA" id="FGCQALV"/>
<dbReference type="OrthoDB" id="10265785at2759"/>
<dbReference type="PAN-GO" id="Q14240">
    <property type="GO annotations" value="2 GO annotations based on evolutionary models"/>
</dbReference>
<dbReference type="PhylomeDB" id="Q14240"/>
<dbReference type="TreeFam" id="TF101524"/>
<dbReference type="PathwayCommons" id="Q14240"/>
<dbReference type="Reactome" id="R-HSA-1169408">
    <property type="pathway name" value="ISG15 antiviral mechanism"/>
</dbReference>
<dbReference type="Reactome" id="R-HSA-156827">
    <property type="pathway name" value="L13a-mediated translational silencing of Ceruloplasmin expression"/>
</dbReference>
<dbReference type="Reactome" id="R-HSA-429947">
    <property type="pathway name" value="Deadenylation of mRNA"/>
</dbReference>
<dbReference type="Reactome" id="R-HSA-72649">
    <property type="pathway name" value="Translation initiation complex formation"/>
</dbReference>
<dbReference type="Reactome" id="R-HSA-72662">
    <property type="pathway name" value="Activation of the mRNA upon binding of the cap-binding complex and eIFs, and subsequent binding to 43S"/>
</dbReference>
<dbReference type="Reactome" id="R-HSA-72702">
    <property type="pathway name" value="Ribosomal scanning and start codon recognition"/>
</dbReference>
<dbReference type="Reactome" id="R-HSA-72706">
    <property type="pathway name" value="GTP hydrolysis and joining of the 60S ribosomal subunit"/>
</dbReference>
<dbReference type="Reactome" id="R-HSA-9820841">
    <property type="pathway name" value="M-decay: degradation of maternal mRNAs by maternally stored factors"/>
</dbReference>
<dbReference type="Reactome" id="R-HSA-9820865">
    <property type="pathway name" value="Z-decay: degradation of maternal mRNAs by zygotically expressed factors"/>
</dbReference>
<dbReference type="SignaLink" id="Q14240"/>
<dbReference type="SIGNOR" id="Q14240"/>
<dbReference type="BioGRID-ORCS" id="1974">
    <property type="hits" value="14 hits in 1152 CRISPR screens"/>
</dbReference>
<dbReference type="CD-CODE" id="DEE660B4">
    <property type="entry name" value="Stress granule"/>
</dbReference>
<dbReference type="CD-CODE" id="FB4E32DD">
    <property type="entry name" value="Presynaptic clusters and postsynaptic densities"/>
</dbReference>
<dbReference type="ChiTaRS" id="EIF4A2">
    <property type="organism name" value="human"/>
</dbReference>
<dbReference type="EvolutionaryTrace" id="Q14240"/>
<dbReference type="GeneWiki" id="EIF4A2"/>
<dbReference type="GenomeRNAi" id="1974"/>
<dbReference type="Pharos" id="Q14240">
    <property type="development level" value="Tbio"/>
</dbReference>
<dbReference type="PRO" id="PR:Q14240"/>
<dbReference type="Proteomes" id="UP000005640">
    <property type="component" value="Chromosome 3"/>
</dbReference>
<dbReference type="RNAct" id="Q14240">
    <property type="molecule type" value="protein"/>
</dbReference>
<dbReference type="Bgee" id="ENSG00000156976">
    <property type="expression patterns" value="Expressed in secondary oocyte and 210 other cell types or tissues"/>
</dbReference>
<dbReference type="ExpressionAtlas" id="Q14240">
    <property type="expression patterns" value="baseline and differential"/>
</dbReference>
<dbReference type="GO" id="GO:0005829">
    <property type="term" value="C:cytosol"/>
    <property type="evidence" value="ECO:0000304"/>
    <property type="project" value="Reactome"/>
</dbReference>
<dbReference type="GO" id="GO:0016281">
    <property type="term" value="C:eukaryotic translation initiation factor 4F complex"/>
    <property type="evidence" value="ECO:0000304"/>
    <property type="project" value="ProtInc"/>
</dbReference>
<dbReference type="GO" id="GO:0048471">
    <property type="term" value="C:perinuclear region of cytoplasm"/>
    <property type="evidence" value="ECO:0000314"/>
    <property type="project" value="AgBase"/>
</dbReference>
<dbReference type="GO" id="GO:0005524">
    <property type="term" value="F:ATP binding"/>
    <property type="evidence" value="ECO:0007669"/>
    <property type="project" value="UniProtKB-KW"/>
</dbReference>
<dbReference type="GO" id="GO:0016887">
    <property type="term" value="F:ATP hydrolysis activity"/>
    <property type="evidence" value="ECO:0000314"/>
    <property type="project" value="AgBase"/>
</dbReference>
<dbReference type="GO" id="GO:0004386">
    <property type="term" value="F:helicase activity"/>
    <property type="evidence" value="ECO:0000304"/>
    <property type="project" value="ProtInc"/>
</dbReference>
<dbReference type="GO" id="GO:0003723">
    <property type="term" value="F:RNA binding"/>
    <property type="evidence" value="ECO:0007005"/>
    <property type="project" value="UniProtKB"/>
</dbReference>
<dbReference type="GO" id="GO:0003724">
    <property type="term" value="F:RNA helicase activity"/>
    <property type="evidence" value="ECO:0007669"/>
    <property type="project" value="UniProtKB-EC"/>
</dbReference>
<dbReference type="GO" id="GO:0003743">
    <property type="term" value="F:translation initiation factor activity"/>
    <property type="evidence" value="ECO:0000318"/>
    <property type="project" value="GO_Central"/>
</dbReference>
<dbReference type="GO" id="GO:1990830">
    <property type="term" value="P:cellular response to leukemia inhibitory factor"/>
    <property type="evidence" value="ECO:0007669"/>
    <property type="project" value="Ensembl"/>
</dbReference>
<dbReference type="GO" id="GO:0002183">
    <property type="term" value="P:cytoplasmic translational initiation"/>
    <property type="evidence" value="ECO:0000318"/>
    <property type="project" value="GO_Central"/>
</dbReference>
<dbReference type="GO" id="GO:1900260">
    <property type="term" value="P:negative regulation of RNA-dependent RNA polymerase activity"/>
    <property type="evidence" value="ECO:0000314"/>
    <property type="project" value="AgBase"/>
</dbReference>
<dbReference type="GO" id="GO:0006446">
    <property type="term" value="P:regulation of translational initiation"/>
    <property type="evidence" value="ECO:0000304"/>
    <property type="project" value="ProtInc"/>
</dbReference>
<dbReference type="GO" id="GO:0006413">
    <property type="term" value="P:translational initiation"/>
    <property type="evidence" value="ECO:0000303"/>
    <property type="project" value="ComplexPortal"/>
</dbReference>
<dbReference type="CDD" id="cd18046">
    <property type="entry name" value="DEADc_EIF4AII_EIF4AI_DDX2"/>
    <property type="match status" value="1"/>
</dbReference>
<dbReference type="CDD" id="cd18787">
    <property type="entry name" value="SF2_C_DEAD"/>
    <property type="match status" value="1"/>
</dbReference>
<dbReference type="FunFam" id="3.40.50.300:FF:000089">
    <property type="entry name" value="Eukaryotic initiation factor 4A-II"/>
    <property type="match status" value="1"/>
</dbReference>
<dbReference type="FunFam" id="3.40.50.300:FF:000031">
    <property type="entry name" value="Eukaryotic initiation factor 4A-III"/>
    <property type="match status" value="1"/>
</dbReference>
<dbReference type="Gene3D" id="3.40.50.300">
    <property type="entry name" value="P-loop containing nucleotide triphosphate hydrolases"/>
    <property type="match status" value="2"/>
</dbReference>
<dbReference type="InterPro" id="IPR011545">
    <property type="entry name" value="DEAD/DEAH_box_helicase_dom"/>
</dbReference>
<dbReference type="InterPro" id="IPR044728">
    <property type="entry name" value="EIF4A_DEADc"/>
</dbReference>
<dbReference type="InterPro" id="IPR014001">
    <property type="entry name" value="Helicase_ATP-bd"/>
</dbReference>
<dbReference type="InterPro" id="IPR001650">
    <property type="entry name" value="Helicase_C-like"/>
</dbReference>
<dbReference type="InterPro" id="IPR027417">
    <property type="entry name" value="P-loop_NTPase"/>
</dbReference>
<dbReference type="InterPro" id="IPR000629">
    <property type="entry name" value="RNA-helicase_DEAD-box_CS"/>
</dbReference>
<dbReference type="InterPro" id="IPR014014">
    <property type="entry name" value="RNA_helicase_DEAD_Q_motif"/>
</dbReference>
<dbReference type="PANTHER" id="PTHR47958">
    <property type="entry name" value="ATP-DEPENDENT RNA HELICASE DBP3"/>
    <property type="match status" value="1"/>
</dbReference>
<dbReference type="Pfam" id="PF00270">
    <property type="entry name" value="DEAD"/>
    <property type="match status" value="1"/>
</dbReference>
<dbReference type="Pfam" id="PF00271">
    <property type="entry name" value="Helicase_C"/>
    <property type="match status" value="1"/>
</dbReference>
<dbReference type="SMART" id="SM00487">
    <property type="entry name" value="DEXDc"/>
    <property type="match status" value="1"/>
</dbReference>
<dbReference type="SMART" id="SM00490">
    <property type="entry name" value="HELICc"/>
    <property type="match status" value="1"/>
</dbReference>
<dbReference type="SUPFAM" id="SSF52540">
    <property type="entry name" value="P-loop containing nucleoside triphosphate hydrolases"/>
    <property type="match status" value="1"/>
</dbReference>
<dbReference type="PROSITE" id="PS00039">
    <property type="entry name" value="DEAD_ATP_HELICASE"/>
    <property type="match status" value="1"/>
</dbReference>
<dbReference type="PROSITE" id="PS51192">
    <property type="entry name" value="HELICASE_ATP_BIND_1"/>
    <property type="match status" value="1"/>
</dbReference>
<dbReference type="PROSITE" id="PS51194">
    <property type="entry name" value="HELICASE_CTER"/>
    <property type="match status" value="1"/>
</dbReference>
<dbReference type="PROSITE" id="PS51195">
    <property type="entry name" value="Q_MOTIF"/>
    <property type="match status" value="1"/>
</dbReference>
<comment type="function">
    <text>ATP-dependent RNA helicase which is a subunit of the eIF4F complex involved in cap recognition and is required for mRNA binding to ribosome. In the current model of translation initiation, eIF4A unwinds RNA secondary structures in the 5'-UTR of mRNAs which is necessary to allow efficient binding of the small ribosomal subunit, and subsequent scanning for the initiator codon.</text>
</comment>
<comment type="catalytic activity">
    <reaction>
        <text>ATP + H2O = ADP + phosphate + H(+)</text>
        <dbReference type="Rhea" id="RHEA:13065"/>
        <dbReference type="ChEBI" id="CHEBI:15377"/>
        <dbReference type="ChEBI" id="CHEBI:15378"/>
        <dbReference type="ChEBI" id="CHEBI:30616"/>
        <dbReference type="ChEBI" id="CHEBI:43474"/>
        <dbReference type="ChEBI" id="CHEBI:456216"/>
        <dbReference type="EC" id="3.6.4.13"/>
    </reaction>
</comment>
<comment type="subunit">
    <text evidence="1 5 6">eIF4F is a multi-subunit complex, the composition of which varies with external and internal environmental conditions. It is composed of at least EIF4A, EIF4E and EIF4G1/EIFFG3 (By similarity). Interacts with EIF4E. May interact with NOM1.</text>
</comment>
<comment type="subunit">
    <text evidence="6">(Microbial infection) Interacts with herpes simplex virus 1/HHV-1 protein Vhs.</text>
</comment>
<comment type="interaction">
    <interactant intactId="EBI-73473">
        <id>Q14240</id>
    </interactant>
    <interactant intactId="EBI-710457">
        <id>Q7L190</id>
        <label>DPPA4</label>
    </interactant>
    <organismsDiffer>false</organismsDiffer>
    <experiments>3</experiments>
</comment>
<comment type="interaction">
    <interactant intactId="EBI-73473">
        <id>Q14240</id>
    </interactant>
    <interactant intactId="EBI-352682">
        <id>P04792</id>
        <label>HSPB1</label>
    </interactant>
    <organismsDiffer>false</organismsDiffer>
    <experiments>2</experiments>
</comment>
<comment type="interaction">
    <interactant intactId="EBI-73473">
        <id>Q14240</id>
    </interactant>
    <interactant intactId="EBI-748752">
        <id>Q9UI26</id>
        <label>IPO11</label>
    </interactant>
    <organismsDiffer>false</organismsDiffer>
    <experiments>3</experiments>
</comment>
<comment type="interaction">
    <interactant intactId="EBI-73473">
        <id>Q14240</id>
    </interactant>
    <interactant intactId="EBI-935824">
        <id>Q53EL6</id>
        <label>PDCD4</label>
    </interactant>
    <organismsDiffer>false</organismsDiffer>
    <experiments>5</experiments>
</comment>
<comment type="interaction">
    <interactant intactId="EBI-73473">
        <id>Q14240</id>
    </interactant>
    <interactant intactId="EBI-10232636">
        <id>Q7RTY1</id>
        <label>SLC16A9</label>
    </interactant>
    <organismsDiffer>false</organismsDiffer>
    <experiments>3</experiments>
</comment>
<comment type="interaction">
    <interactant intactId="EBI-73473">
        <id>Q14240</id>
    </interactant>
    <interactant intactId="EBI-2212028">
        <id>Q9Y2D8</id>
        <label>SSX2IP</label>
    </interactant>
    <organismsDiffer>false</organismsDiffer>
    <experiments>3</experiments>
</comment>
<comment type="interaction">
    <interactant intactId="EBI-73473">
        <id>Q14240</id>
    </interactant>
    <interactant intactId="EBI-2341518">
        <id>Q9NQ86</id>
        <label>TRIM36</label>
    </interactant>
    <organismsDiffer>false</organismsDiffer>
    <experiments>3</experiments>
</comment>
<comment type="interaction">
    <interactant intactId="EBI-73473">
        <id>Q14240</id>
    </interactant>
    <interactant intactId="EBI-739510">
        <id>Q9HCM9</id>
        <label>TRIM39</label>
    </interactant>
    <organismsDiffer>false</organismsDiffer>
    <experiments>4</experiments>
</comment>
<comment type="interaction">
    <interactant intactId="EBI-73473">
        <id>Q14240</id>
    </interactant>
    <interactant intactId="EBI-6904388">
        <id>PRO_0000037577</id>
        <dbReference type="UniProtKB" id="P27958"/>
    </interactant>
    <organismsDiffer>true</organismsDiffer>
    <experiments>4</experiments>
</comment>
<comment type="interaction">
    <interactant intactId="EBI-10232522">
        <id>Q14240-2</id>
    </interactant>
    <interactant intactId="EBI-930964">
        <id>P54253</id>
        <label>ATXN1</label>
    </interactant>
    <organismsDiffer>false</organismsDiffer>
    <experiments>3</experiments>
</comment>
<comment type="interaction">
    <interactant intactId="EBI-10232522">
        <id>Q14240-2</id>
    </interactant>
    <interactant intactId="EBI-742054">
        <id>Q96D03</id>
        <label>DDIT4L</label>
    </interactant>
    <organismsDiffer>false</organismsDiffer>
    <experiments>3</experiments>
</comment>
<comment type="interaction">
    <interactant intactId="EBI-10232522">
        <id>Q14240-2</id>
    </interactant>
    <interactant intactId="EBI-710457">
        <id>Q7L190</id>
        <label>DPPA4</label>
    </interactant>
    <organismsDiffer>false</organismsDiffer>
    <experiments>3</experiments>
</comment>
<comment type="interaction">
    <interactant intactId="EBI-10232522">
        <id>Q14240-2</id>
    </interactant>
    <interactant intactId="EBI-466029">
        <id>P42858</id>
        <label>HTT</label>
    </interactant>
    <organismsDiffer>false</organismsDiffer>
    <experiments>3</experiments>
</comment>
<comment type="interaction">
    <interactant intactId="EBI-10232522">
        <id>Q14240-2</id>
    </interactant>
    <interactant intactId="EBI-724076">
        <id>Q99750</id>
        <label>MDFI</label>
    </interactant>
    <organismsDiffer>false</organismsDiffer>
    <experiments>3</experiments>
</comment>
<comment type="interaction">
    <interactant intactId="EBI-10232522">
        <id>Q14240-2</id>
    </interactant>
    <interactant intactId="EBI-935824">
        <id>Q53EL6</id>
        <label>PDCD4</label>
    </interactant>
    <organismsDiffer>false</organismsDiffer>
    <experiments>3</experiments>
</comment>
<comment type="interaction">
    <interactant intactId="EBI-10232522">
        <id>Q14240-2</id>
    </interactant>
    <interactant intactId="EBI-10232538">
        <id>Q8WWB5</id>
        <label>PIH1D2</label>
    </interactant>
    <organismsDiffer>false</organismsDiffer>
    <experiments>3</experiments>
</comment>
<comment type="interaction">
    <interactant intactId="EBI-10232522">
        <id>Q14240-2</id>
    </interactant>
    <interactant intactId="EBI-2212028">
        <id>Q9Y2D8</id>
        <label>SSX2IP</label>
    </interactant>
    <organismsDiffer>false</organismsDiffer>
    <experiments>3</experiments>
</comment>
<comment type="interaction">
    <interactant intactId="EBI-10232522">
        <id>Q14240-2</id>
    </interactant>
    <interactant intactId="EBI-2341518">
        <id>Q9NQ86</id>
        <label>TRIM36</label>
    </interactant>
    <organismsDiffer>false</organismsDiffer>
    <experiments>3</experiments>
</comment>
<comment type="interaction">
    <interactant intactId="EBI-10232522">
        <id>Q14240-2</id>
    </interactant>
    <interactant intactId="EBI-739510">
        <id>Q9HCM9</id>
        <label>TRIM39</label>
    </interactant>
    <organismsDiffer>false</organismsDiffer>
    <experiments>3</experiments>
</comment>
<comment type="interaction">
    <interactant intactId="EBI-10232522">
        <id>Q14240-2</id>
    </interactant>
    <interactant intactId="EBI-4395669">
        <id>Q6ZNG0</id>
        <label>ZNF620</label>
    </interactant>
    <organismsDiffer>false</organismsDiffer>
    <experiments>3</experiments>
</comment>
<comment type="alternative products">
    <event type="alternative splicing"/>
    <isoform>
        <id>Q14240-1</id>
        <name>1</name>
        <sequence type="displayed"/>
    </isoform>
    <isoform>
        <id>Q14240-2</id>
        <name>2</name>
        <sequence type="described" ref="VSP_009629"/>
    </isoform>
</comment>
<comment type="disease" evidence="8">
    <disease id="DI-06734">
        <name>Neurodevelopmental disorder with hypotonia and speech delay, with or without seizures</name>
        <acronym>NEDHSS</acronym>
        <description>A disorder characterized by global developmental delay, intellectual disability, poor or absent speech, hypotonia, epilepsy, and structural brain anomalies. Inheritance is autosomal dominant or autosomal recessive.</description>
        <dbReference type="MIM" id="620455"/>
    </disease>
    <text>The disease is caused by variants affecting the gene represented in this entry.</text>
</comment>
<comment type="similarity">
    <text evidence="10">Belongs to the DEAD box helicase family. eIF4A subfamily.</text>
</comment>
<comment type="online information" name="Atlas of Genetics and Cytogenetics in Oncology and Haematology">
    <link uri="https://atlasgeneticsoncology.org/gene/262/EIF4A2"/>
</comment>
<proteinExistence type="evidence at protein level"/>
<gene>
    <name type="primary">EIF4A2</name>
    <name type="synonym">DDX2B</name>
    <name type="synonym">EIF4F</name>
</gene>